<evidence type="ECO:0000255" key="1">
    <source>
        <dbReference type="HAMAP-Rule" id="MF_01563"/>
    </source>
</evidence>
<sequence length="251" mass="27602">MTEAQRHQILLEMLAQLGFVTVEKVVERLGISPATARRDINKLDESGKLKKVRNGAEAITQQRPRWTPMNLHQAQNHDEKVRIAKAASQLVNPGESVVINCGSTAFLLGREMCGKPVQIITNYLPLANYLIDQEHDSVIIMGGQYNKSQSITLSPQGSENSLYAGHWMFTSGKGLTAEGLYKTDMLTAMAEQKMLSVVGKLVVLVDSSKIGERAGMLFSRADQIDMLITGKNANPEILQQLEAQGVSILRV</sequence>
<reference key="1">
    <citation type="journal article" date="2006" name="Mol. Microbiol.">
        <title>Role of pathogenicity island-associated integrases in the genome plasticity of uropathogenic Escherichia coli strain 536.</title>
        <authorList>
            <person name="Hochhut B."/>
            <person name="Wilde C."/>
            <person name="Balling G."/>
            <person name="Middendorf B."/>
            <person name="Dobrindt U."/>
            <person name="Brzuszkiewicz E."/>
            <person name="Gottschalk G."/>
            <person name="Carniel E."/>
            <person name="Hacker J."/>
        </authorList>
    </citation>
    <scope>NUCLEOTIDE SEQUENCE [LARGE SCALE GENOMIC DNA]</scope>
    <source>
        <strain>536 / UPEC</strain>
    </source>
</reference>
<name>ULAR_ECOL5</name>
<feature type="chain" id="PRO_1000069049" description="HTH-type transcriptional regulator UlaR">
    <location>
        <begin position="1"/>
        <end position="251"/>
    </location>
</feature>
<feature type="domain" description="HTH deoR-type" evidence="1">
    <location>
        <begin position="3"/>
        <end position="58"/>
    </location>
</feature>
<feature type="DNA-binding region" description="H-T-H motif" evidence="1">
    <location>
        <begin position="20"/>
        <end position="39"/>
    </location>
</feature>
<proteinExistence type="inferred from homology"/>
<organism>
    <name type="scientific">Escherichia coli O6:K15:H31 (strain 536 / UPEC)</name>
    <dbReference type="NCBI Taxonomy" id="362663"/>
    <lineage>
        <taxon>Bacteria</taxon>
        <taxon>Pseudomonadati</taxon>
        <taxon>Pseudomonadota</taxon>
        <taxon>Gammaproteobacteria</taxon>
        <taxon>Enterobacterales</taxon>
        <taxon>Enterobacteriaceae</taxon>
        <taxon>Escherichia</taxon>
    </lineage>
</organism>
<gene>
    <name evidence="1" type="primary">ulaR</name>
    <name type="ordered locus">ECP_4436</name>
</gene>
<accession>Q0T9K2</accession>
<protein>
    <recommendedName>
        <fullName evidence="1">HTH-type transcriptional regulator UlaR</fullName>
    </recommendedName>
</protein>
<keyword id="KW-0963">Cytoplasm</keyword>
<keyword id="KW-0238">DNA-binding</keyword>
<keyword id="KW-0678">Repressor</keyword>
<keyword id="KW-0804">Transcription</keyword>
<keyword id="KW-0805">Transcription regulation</keyword>
<comment type="function">
    <text evidence="1">Represses ulaG and the ulaABCDEF operon.</text>
</comment>
<comment type="subcellular location">
    <subcellularLocation>
        <location evidence="1">Cytoplasm</location>
    </subcellularLocation>
</comment>
<dbReference type="EMBL" id="CP000247">
    <property type="protein sequence ID" value="ABG72377.1"/>
    <property type="molecule type" value="Genomic_DNA"/>
</dbReference>
<dbReference type="RefSeq" id="WP_000133631.1">
    <property type="nucleotide sequence ID" value="NC_008253.1"/>
</dbReference>
<dbReference type="SMR" id="Q0T9K2"/>
<dbReference type="GeneID" id="75202425"/>
<dbReference type="KEGG" id="ecp:ECP_4436"/>
<dbReference type="HOGENOM" id="CLU_060699_3_2_6"/>
<dbReference type="Proteomes" id="UP000009182">
    <property type="component" value="Chromosome"/>
</dbReference>
<dbReference type="GO" id="GO:0005737">
    <property type="term" value="C:cytoplasm"/>
    <property type="evidence" value="ECO:0007669"/>
    <property type="project" value="UniProtKB-SubCell"/>
</dbReference>
<dbReference type="GO" id="GO:0003677">
    <property type="term" value="F:DNA binding"/>
    <property type="evidence" value="ECO:0007669"/>
    <property type="project" value="UniProtKB-KW"/>
</dbReference>
<dbReference type="GO" id="GO:0003700">
    <property type="term" value="F:DNA-binding transcription factor activity"/>
    <property type="evidence" value="ECO:0007669"/>
    <property type="project" value="InterPro"/>
</dbReference>
<dbReference type="GO" id="GO:0045892">
    <property type="term" value="P:negative regulation of DNA-templated transcription"/>
    <property type="evidence" value="ECO:0007669"/>
    <property type="project" value="UniProtKB-UniRule"/>
</dbReference>
<dbReference type="FunFam" id="1.10.10.10:FF:000160">
    <property type="entry name" value="HTH-type transcriptional regulator UlaR"/>
    <property type="match status" value="1"/>
</dbReference>
<dbReference type="Gene3D" id="1.10.10.10">
    <property type="entry name" value="Winged helix-like DNA-binding domain superfamily/Winged helix DNA-binding domain"/>
    <property type="match status" value="1"/>
</dbReference>
<dbReference type="HAMAP" id="MF_01563">
    <property type="entry name" value="HTH_type_UlaR"/>
    <property type="match status" value="1"/>
</dbReference>
<dbReference type="InterPro" id="IPR050313">
    <property type="entry name" value="Carb_Metab_HTH_regulators"/>
</dbReference>
<dbReference type="InterPro" id="IPR014036">
    <property type="entry name" value="DeoR-like_C"/>
</dbReference>
<dbReference type="InterPro" id="IPR001034">
    <property type="entry name" value="DeoR_HTH"/>
</dbReference>
<dbReference type="InterPro" id="IPR037171">
    <property type="entry name" value="NagB/RpiA_transferase-like"/>
</dbReference>
<dbReference type="InterPro" id="IPR018356">
    <property type="entry name" value="Tscrpt_reg_HTH_DeoR_CS"/>
</dbReference>
<dbReference type="InterPro" id="IPR023711">
    <property type="entry name" value="Tscrpt_reg_HTH_UlaR"/>
</dbReference>
<dbReference type="InterPro" id="IPR036388">
    <property type="entry name" value="WH-like_DNA-bd_sf"/>
</dbReference>
<dbReference type="InterPro" id="IPR036390">
    <property type="entry name" value="WH_DNA-bd_sf"/>
</dbReference>
<dbReference type="NCBIfam" id="NF010034">
    <property type="entry name" value="PRK13509.1"/>
    <property type="match status" value="1"/>
</dbReference>
<dbReference type="PANTHER" id="PTHR30363">
    <property type="entry name" value="HTH-TYPE TRANSCRIPTIONAL REGULATOR SRLR-RELATED"/>
    <property type="match status" value="1"/>
</dbReference>
<dbReference type="PANTHER" id="PTHR30363:SF55">
    <property type="entry name" value="HTH-TYPE TRANSCRIPTIONAL REGULATOR ULAR"/>
    <property type="match status" value="1"/>
</dbReference>
<dbReference type="Pfam" id="PF00455">
    <property type="entry name" value="DeoRC"/>
    <property type="match status" value="1"/>
</dbReference>
<dbReference type="Pfam" id="PF08220">
    <property type="entry name" value="HTH_DeoR"/>
    <property type="match status" value="1"/>
</dbReference>
<dbReference type="PRINTS" id="PR00037">
    <property type="entry name" value="HTHLACR"/>
</dbReference>
<dbReference type="SMART" id="SM01134">
    <property type="entry name" value="DeoRC"/>
    <property type="match status" value="1"/>
</dbReference>
<dbReference type="SMART" id="SM00420">
    <property type="entry name" value="HTH_DEOR"/>
    <property type="match status" value="1"/>
</dbReference>
<dbReference type="SUPFAM" id="SSF100950">
    <property type="entry name" value="NagB/RpiA/CoA transferase-like"/>
    <property type="match status" value="1"/>
</dbReference>
<dbReference type="SUPFAM" id="SSF46785">
    <property type="entry name" value="Winged helix' DNA-binding domain"/>
    <property type="match status" value="1"/>
</dbReference>
<dbReference type="PROSITE" id="PS00894">
    <property type="entry name" value="HTH_DEOR_1"/>
    <property type="match status" value="1"/>
</dbReference>
<dbReference type="PROSITE" id="PS51000">
    <property type="entry name" value="HTH_DEOR_2"/>
    <property type="match status" value="1"/>
</dbReference>